<sequence>MINVLLVDDHELVRAGIRRILEDIKGIKVVGEASCGEDAVKWCRTNAVDVVLMDMSMPGIGGLEATRKIARSTADVKIIMLTVHTENPLPAKVMQAGAAGYLSKGAAPQEVVSAIRSVYSGQRYIASDIAQQMALSQIEPEKTESPFASLSERELQIMLMITKGQKVNEISEQLNLSPKTVNSYRYRMFSKLNIHGDVELTHLAIRHGLCNAETLSSQ</sequence>
<keyword id="KW-0963">Cytoplasm</keyword>
<keyword id="KW-0238">DNA-binding</keyword>
<keyword id="KW-0597">Phosphoprotein</keyword>
<keyword id="KW-1185">Reference proteome</keyword>
<keyword id="KW-0804">Transcription</keyword>
<keyword id="KW-0805">Transcription regulation</keyword>
<keyword id="KW-0902">Two-component regulatory system</keyword>
<evidence type="ECO:0000250" key="1"/>
<evidence type="ECO:0000255" key="2">
    <source>
        <dbReference type="PROSITE-ProRule" id="PRU00169"/>
    </source>
</evidence>
<evidence type="ECO:0000255" key="3">
    <source>
        <dbReference type="PROSITE-ProRule" id="PRU00411"/>
    </source>
</evidence>
<reference key="1">
    <citation type="journal article" date="2002" name="Nucleic Acids Res.">
        <title>Genome sequence of Shigella flexneri 2a: insights into pathogenicity through comparison with genomes of Escherichia coli K12 and O157.</title>
        <authorList>
            <person name="Jin Q."/>
            <person name="Yuan Z."/>
            <person name="Xu J."/>
            <person name="Wang Y."/>
            <person name="Shen Y."/>
            <person name="Lu W."/>
            <person name="Wang J."/>
            <person name="Liu H."/>
            <person name="Yang J."/>
            <person name="Yang F."/>
            <person name="Zhang X."/>
            <person name="Zhang J."/>
            <person name="Yang G."/>
            <person name="Wu H."/>
            <person name="Qu D."/>
            <person name="Dong J."/>
            <person name="Sun L."/>
            <person name="Xue Y."/>
            <person name="Zhao A."/>
            <person name="Gao Y."/>
            <person name="Zhu J."/>
            <person name="Kan B."/>
            <person name="Ding K."/>
            <person name="Chen S."/>
            <person name="Cheng H."/>
            <person name="Yao Z."/>
            <person name="He B."/>
            <person name="Chen R."/>
            <person name="Ma D."/>
            <person name="Qiang B."/>
            <person name="Wen Y."/>
            <person name="Hou Y."/>
            <person name="Yu J."/>
        </authorList>
    </citation>
    <scope>NUCLEOTIDE SEQUENCE [LARGE SCALE GENOMIC DNA]</scope>
    <source>
        <strain>301 / Serotype 2a</strain>
    </source>
</reference>
<reference key="2">
    <citation type="journal article" date="2003" name="Infect. Immun.">
        <title>Complete genome sequence and comparative genomics of Shigella flexneri serotype 2a strain 2457T.</title>
        <authorList>
            <person name="Wei J."/>
            <person name="Goldberg M.B."/>
            <person name="Burland V."/>
            <person name="Venkatesan M.M."/>
            <person name="Deng W."/>
            <person name="Fournier G."/>
            <person name="Mayhew G.F."/>
            <person name="Plunkett G. III"/>
            <person name="Rose D.J."/>
            <person name="Darling A."/>
            <person name="Mau B."/>
            <person name="Perna N.T."/>
            <person name="Payne S.M."/>
            <person name="Runyen-Janecky L.J."/>
            <person name="Zhou S."/>
            <person name="Schwartz D.C."/>
            <person name="Blattner F.R."/>
        </authorList>
    </citation>
    <scope>NUCLEOTIDE SEQUENCE [LARGE SCALE GENOMIC DNA]</scope>
    <source>
        <strain>ATCC 700930 / 2457T / Serotype 2a</strain>
    </source>
</reference>
<protein>
    <recommendedName>
        <fullName>Response regulator UvrY</fullName>
    </recommendedName>
</protein>
<dbReference type="EMBL" id="AE005674">
    <property type="protein sequence ID" value="AAN43508.1"/>
    <property type="molecule type" value="Genomic_DNA"/>
</dbReference>
<dbReference type="EMBL" id="AE014073">
    <property type="protein sequence ID" value="AAP17338.1"/>
    <property type="molecule type" value="Genomic_DNA"/>
</dbReference>
<dbReference type="RefSeq" id="NP_707801.1">
    <property type="nucleotide sequence ID" value="NC_004337.2"/>
</dbReference>
<dbReference type="RefSeq" id="WP_000611335.1">
    <property type="nucleotide sequence ID" value="NZ_WPGW01000033.1"/>
</dbReference>
<dbReference type="SMR" id="P0AED6"/>
<dbReference type="STRING" id="198214.SF1957"/>
<dbReference type="PaxDb" id="198214-SF1957"/>
<dbReference type="GeneID" id="1025182"/>
<dbReference type="GeneID" id="93776219"/>
<dbReference type="KEGG" id="sfl:SF1957"/>
<dbReference type="KEGG" id="sfx:S2053"/>
<dbReference type="PATRIC" id="fig|198214.7.peg.2336"/>
<dbReference type="HOGENOM" id="CLU_000445_90_1_6"/>
<dbReference type="Proteomes" id="UP000001006">
    <property type="component" value="Chromosome"/>
</dbReference>
<dbReference type="Proteomes" id="UP000002673">
    <property type="component" value="Chromosome"/>
</dbReference>
<dbReference type="GO" id="GO:0005737">
    <property type="term" value="C:cytoplasm"/>
    <property type="evidence" value="ECO:0007669"/>
    <property type="project" value="UniProtKB-SubCell"/>
</dbReference>
<dbReference type="GO" id="GO:0003677">
    <property type="term" value="F:DNA binding"/>
    <property type="evidence" value="ECO:0007669"/>
    <property type="project" value="UniProtKB-KW"/>
</dbReference>
<dbReference type="GO" id="GO:0000160">
    <property type="term" value="P:phosphorelay signal transduction system"/>
    <property type="evidence" value="ECO:0007669"/>
    <property type="project" value="UniProtKB-KW"/>
</dbReference>
<dbReference type="GO" id="GO:0006355">
    <property type="term" value="P:regulation of DNA-templated transcription"/>
    <property type="evidence" value="ECO:0007669"/>
    <property type="project" value="InterPro"/>
</dbReference>
<dbReference type="CDD" id="cd06170">
    <property type="entry name" value="LuxR_C_like"/>
    <property type="match status" value="1"/>
</dbReference>
<dbReference type="CDD" id="cd17535">
    <property type="entry name" value="REC_NarL-like"/>
    <property type="match status" value="1"/>
</dbReference>
<dbReference type="FunFam" id="3.40.50.2300:FF:000015">
    <property type="entry name" value="Two-component response regulator UvrY"/>
    <property type="match status" value="1"/>
</dbReference>
<dbReference type="Gene3D" id="3.40.50.2300">
    <property type="match status" value="1"/>
</dbReference>
<dbReference type="InterPro" id="IPR011006">
    <property type="entry name" value="CheY-like_superfamily"/>
</dbReference>
<dbReference type="InterPro" id="IPR016032">
    <property type="entry name" value="Sig_transdc_resp-reg_C-effctor"/>
</dbReference>
<dbReference type="InterPro" id="IPR001789">
    <property type="entry name" value="Sig_transdc_resp-reg_receiver"/>
</dbReference>
<dbReference type="InterPro" id="IPR000792">
    <property type="entry name" value="Tscrpt_reg_LuxR_C"/>
</dbReference>
<dbReference type="InterPro" id="IPR039420">
    <property type="entry name" value="WalR-like"/>
</dbReference>
<dbReference type="NCBIfam" id="NF007018">
    <property type="entry name" value="PRK09483.1"/>
    <property type="match status" value="1"/>
</dbReference>
<dbReference type="PANTHER" id="PTHR43214:SF3">
    <property type="entry name" value="RESPONSE REGULATOR UVRY"/>
    <property type="match status" value="1"/>
</dbReference>
<dbReference type="PANTHER" id="PTHR43214">
    <property type="entry name" value="TWO-COMPONENT RESPONSE REGULATOR"/>
    <property type="match status" value="1"/>
</dbReference>
<dbReference type="Pfam" id="PF00196">
    <property type="entry name" value="GerE"/>
    <property type="match status" value="1"/>
</dbReference>
<dbReference type="Pfam" id="PF00072">
    <property type="entry name" value="Response_reg"/>
    <property type="match status" value="1"/>
</dbReference>
<dbReference type="PRINTS" id="PR00038">
    <property type="entry name" value="HTHLUXR"/>
</dbReference>
<dbReference type="SMART" id="SM00421">
    <property type="entry name" value="HTH_LUXR"/>
    <property type="match status" value="1"/>
</dbReference>
<dbReference type="SMART" id="SM00448">
    <property type="entry name" value="REC"/>
    <property type="match status" value="1"/>
</dbReference>
<dbReference type="SUPFAM" id="SSF46894">
    <property type="entry name" value="C-terminal effector domain of the bipartite response regulators"/>
    <property type="match status" value="1"/>
</dbReference>
<dbReference type="SUPFAM" id="SSF52172">
    <property type="entry name" value="CheY-like"/>
    <property type="match status" value="1"/>
</dbReference>
<dbReference type="PROSITE" id="PS00622">
    <property type="entry name" value="HTH_LUXR_1"/>
    <property type="match status" value="1"/>
</dbReference>
<dbReference type="PROSITE" id="PS50043">
    <property type="entry name" value="HTH_LUXR_2"/>
    <property type="match status" value="1"/>
</dbReference>
<dbReference type="PROSITE" id="PS50110">
    <property type="entry name" value="RESPONSE_REGULATORY"/>
    <property type="match status" value="1"/>
</dbReference>
<comment type="function">
    <text evidence="1">Member of the two-component regulatory system UvrY/BarA involved in the regulation of carbon metabolism via the CsrA/CsrB regulatory system. UvrY activates the transcription of the untranslated csrB RNA and of barA, in an autoregulatory loop. Mediates the effects of CsrA on csrB RNA by BarA-dependent and BarA-independent mechanisms (By similarity).</text>
</comment>
<comment type="subcellular location">
    <subcellularLocation>
        <location evidence="1">Cytoplasm</location>
    </subcellularLocation>
</comment>
<comment type="PTM">
    <text evidence="1">Phosphorylated and activated by BarA.</text>
</comment>
<organism>
    <name type="scientific">Shigella flexneri</name>
    <dbReference type="NCBI Taxonomy" id="623"/>
    <lineage>
        <taxon>Bacteria</taxon>
        <taxon>Pseudomonadati</taxon>
        <taxon>Pseudomonadota</taxon>
        <taxon>Gammaproteobacteria</taxon>
        <taxon>Enterobacterales</taxon>
        <taxon>Enterobacteriaceae</taxon>
        <taxon>Shigella</taxon>
    </lineage>
</organism>
<feature type="chain" id="PRO_0000081295" description="Response regulator UvrY">
    <location>
        <begin position="1"/>
        <end position="218"/>
    </location>
</feature>
<feature type="domain" description="Response regulatory" evidence="2">
    <location>
        <begin position="3"/>
        <end position="119"/>
    </location>
</feature>
<feature type="domain" description="HTH luxR-type" evidence="3">
    <location>
        <begin position="143"/>
        <end position="208"/>
    </location>
</feature>
<feature type="DNA-binding region" description="H-T-H motif" evidence="3">
    <location>
        <begin position="167"/>
        <end position="186"/>
    </location>
</feature>
<feature type="modified residue" description="4-aspartylphosphate" evidence="2">
    <location>
        <position position="54"/>
    </location>
</feature>
<proteinExistence type="inferred from homology"/>
<name>UVRY_SHIFL</name>
<gene>
    <name type="primary">uvrY</name>
    <name type="ordered locus">SF1957</name>
    <name type="ordered locus">S2053</name>
</gene>
<accession>P0AED6</accession>
<accession>P07027</accession>